<protein>
    <recommendedName>
        <fullName evidence="1">Glycine dehydrogenase (decarboxylating)</fullName>
        <ecNumber evidence="1">1.4.4.2</ecNumber>
    </recommendedName>
    <alternativeName>
        <fullName evidence="1">Glycine cleavage system P-protein</fullName>
    </alternativeName>
    <alternativeName>
        <fullName evidence="1">Glycine decarboxylase</fullName>
    </alternativeName>
    <alternativeName>
        <fullName evidence="1">Glycine dehydrogenase (aminomethyl-transferring)</fullName>
    </alternativeName>
</protein>
<proteinExistence type="inferred from homology"/>
<accession>A5EMM2</accession>
<gene>
    <name evidence="1" type="primary">gcvP</name>
    <name type="ordered locus">BBta_5451</name>
</gene>
<feature type="chain" id="PRO_1000062072" description="Glycine dehydrogenase (decarboxylating)">
    <location>
        <begin position="1"/>
        <end position="957"/>
    </location>
</feature>
<feature type="modified residue" description="N6-(pyridoxal phosphate)lysine" evidence="1">
    <location>
        <position position="702"/>
    </location>
</feature>
<dbReference type="EC" id="1.4.4.2" evidence="1"/>
<dbReference type="EMBL" id="CP000494">
    <property type="protein sequence ID" value="ABQ37416.1"/>
    <property type="molecule type" value="Genomic_DNA"/>
</dbReference>
<dbReference type="RefSeq" id="WP_012045378.1">
    <property type="nucleotide sequence ID" value="NC_009485.1"/>
</dbReference>
<dbReference type="SMR" id="A5EMM2"/>
<dbReference type="STRING" id="288000.BBta_5451"/>
<dbReference type="KEGG" id="bbt:BBta_5451"/>
<dbReference type="eggNOG" id="COG0403">
    <property type="taxonomic scope" value="Bacteria"/>
</dbReference>
<dbReference type="eggNOG" id="COG1003">
    <property type="taxonomic scope" value="Bacteria"/>
</dbReference>
<dbReference type="HOGENOM" id="CLU_004620_3_2_5"/>
<dbReference type="OrthoDB" id="9801272at2"/>
<dbReference type="Proteomes" id="UP000000246">
    <property type="component" value="Chromosome"/>
</dbReference>
<dbReference type="GO" id="GO:0005829">
    <property type="term" value="C:cytosol"/>
    <property type="evidence" value="ECO:0007669"/>
    <property type="project" value="TreeGrafter"/>
</dbReference>
<dbReference type="GO" id="GO:0005960">
    <property type="term" value="C:glycine cleavage complex"/>
    <property type="evidence" value="ECO:0007669"/>
    <property type="project" value="TreeGrafter"/>
</dbReference>
<dbReference type="GO" id="GO:0016594">
    <property type="term" value="F:glycine binding"/>
    <property type="evidence" value="ECO:0007669"/>
    <property type="project" value="TreeGrafter"/>
</dbReference>
<dbReference type="GO" id="GO:0004375">
    <property type="term" value="F:glycine dehydrogenase (decarboxylating) activity"/>
    <property type="evidence" value="ECO:0007669"/>
    <property type="project" value="UniProtKB-EC"/>
</dbReference>
<dbReference type="GO" id="GO:0030170">
    <property type="term" value="F:pyridoxal phosphate binding"/>
    <property type="evidence" value="ECO:0007669"/>
    <property type="project" value="TreeGrafter"/>
</dbReference>
<dbReference type="GO" id="GO:0019464">
    <property type="term" value="P:glycine decarboxylation via glycine cleavage system"/>
    <property type="evidence" value="ECO:0007669"/>
    <property type="project" value="UniProtKB-UniRule"/>
</dbReference>
<dbReference type="CDD" id="cd00613">
    <property type="entry name" value="GDC-P"/>
    <property type="match status" value="2"/>
</dbReference>
<dbReference type="FunFam" id="3.40.640.10:FF:000005">
    <property type="entry name" value="Glycine dehydrogenase (decarboxylating), mitochondrial"/>
    <property type="match status" value="1"/>
</dbReference>
<dbReference type="FunFam" id="3.90.1150.10:FF:000007">
    <property type="entry name" value="Glycine dehydrogenase (decarboxylating), mitochondrial"/>
    <property type="match status" value="1"/>
</dbReference>
<dbReference type="FunFam" id="3.40.640.10:FF:000007">
    <property type="entry name" value="glycine dehydrogenase (Decarboxylating), mitochondrial"/>
    <property type="match status" value="1"/>
</dbReference>
<dbReference type="Gene3D" id="3.90.1150.10">
    <property type="entry name" value="Aspartate Aminotransferase, domain 1"/>
    <property type="match status" value="2"/>
</dbReference>
<dbReference type="Gene3D" id="3.40.640.10">
    <property type="entry name" value="Type I PLP-dependent aspartate aminotransferase-like (Major domain)"/>
    <property type="match status" value="2"/>
</dbReference>
<dbReference type="HAMAP" id="MF_00711">
    <property type="entry name" value="GcvP"/>
    <property type="match status" value="1"/>
</dbReference>
<dbReference type="InterPro" id="IPR003437">
    <property type="entry name" value="GcvP"/>
</dbReference>
<dbReference type="InterPro" id="IPR049316">
    <property type="entry name" value="GDC-P_C"/>
</dbReference>
<dbReference type="InterPro" id="IPR049315">
    <property type="entry name" value="GDC-P_N"/>
</dbReference>
<dbReference type="InterPro" id="IPR020581">
    <property type="entry name" value="GDC_P"/>
</dbReference>
<dbReference type="InterPro" id="IPR015424">
    <property type="entry name" value="PyrdxlP-dep_Trfase"/>
</dbReference>
<dbReference type="InterPro" id="IPR015421">
    <property type="entry name" value="PyrdxlP-dep_Trfase_major"/>
</dbReference>
<dbReference type="InterPro" id="IPR015422">
    <property type="entry name" value="PyrdxlP-dep_Trfase_small"/>
</dbReference>
<dbReference type="NCBIfam" id="TIGR00461">
    <property type="entry name" value="gcvP"/>
    <property type="match status" value="1"/>
</dbReference>
<dbReference type="NCBIfam" id="NF001696">
    <property type="entry name" value="PRK00451.1"/>
    <property type="match status" value="1"/>
</dbReference>
<dbReference type="NCBIfam" id="NF003346">
    <property type="entry name" value="PRK04366.1"/>
    <property type="match status" value="1"/>
</dbReference>
<dbReference type="PANTHER" id="PTHR11773:SF1">
    <property type="entry name" value="GLYCINE DEHYDROGENASE (DECARBOXYLATING), MITOCHONDRIAL"/>
    <property type="match status" value="1"/>
</dbReference>
<dbReference type="PANTHER" id="PTHR11773">
    <property type="entry name" value="GLYCINE DEHYDROGENASE, DECARBOXYLATING"/>
    <property type="match status" value="1"/>
</dbReference>
<dbReference type="Pfam" id="PF21478">
    <property type="entry name" value="GcvP2_C"/>
    <property type="match status" value="1"/>
</dbReference>
<dbReference type="Pfam" id="PF02347">
    <property type="entry name" value="GDC-P"/>
    <property type="match status" value="2"/>
</dbReference>
<dbReference type="SUPFAM" id="SSF53383">
    <property type="entry name" value="PLP-dependent transferases"/>
    <property type="match status" value="2"/>
</dbReference>
<evidence type="ECO:0000255" key="1">
    <source>
        <dbReference type="HAMAP-Rule" id="MF_00711"/>
    </source>
</evidence>
<organism>
    <name type="scientific">Bradyrhizobium sp. (strain BTAi1 / ATCC BAA-1182)</name>
    <dbReference type="NCBI Taxonomy" id="288000"/>
    <lineage>
        <taxon>Bacteria</taxon>
        <taxon>Pseudomonadati</taxon>
        <taxon>Pseudomonadota</taxon>
        <taxon>Alphaproteobacteria</taxon>
        <taxon>Hyphomicrobiales</taxon>
        <taxon>Nitrobacteraceae</taxon>
        <taxon>Bradyrhizobium</taxon>
    </lineage>
</organism>
<keyword id="KW-0560">Oxidoreductase</keyword>
<keyword id="KW-0663">Pyridoxal phosphate</keyword>
<keyword id="KW-1185">Reference proteome</keyword>
<name>GCSP_BRASB</name>
<sequence length="957" mass="102983">MTTPLKPLDDAATSFARRHIGPSPRDVAAMLETVGAKSVAELMAQTLPGTIRQATPLTLEPALSEVEAIGHMRALAAQNQVFTSLIGQGYSGTIMPAVIQRNILENPAWYTAYTPYQPEISQGRLEALFNFQTMICDLTGLDVANASLLDEGTAAAEAMALAERSARAKTKAFFVDRNVHPQTLAVLRTRAEPLGWQLIVGDPVKDLDGAEVFGGLLQYPETTGALRDPRADIAKLHDKGALAILAADLLALTVIASPGELGADIAIGSAQRFGVPMGYGGPHAAYMAVRDALKRSLPGRIVGLSVDSRGAPAYRLALQTREQHIRREKATSNICTAQVLLAVIAAMYAVYHGPDGLKSIARTVHRRAAVLAAGLRKLGFAPASDSFFDTVLVEAGANCDEIIARAESQRINLGRDGSRLRIALDETTTADVVEAVWRAFGGELSYAAIEAEARDAVPAELKRQRPFLTHPVFHAHRSETEMLRYLRKLADRDLALDRAMIPLGSCTMKLNATTEMIPLTWPEFSSLHPFVPRAQAAGYHTMFADLQDWLCRISGYDAVSLQPNSGAQGEYAGLLAIRGYHAARGEGHRTICLIPSSAHGTNPASAHMVGMEVVVVGCDSNGNVDLADLKAKAELHSAKLAAIMITYPSTHGVFEEHIRDICDIVHAHGGQVYLDGANLNAQVGLSRPGDYGADVSHFNLHKTFCIPHGGGGPGMGPIGVKAHLAPFLPGHPATDAATPSPVGPVSAAPYGSASILTISYIYMLLMGGEGLTRATEIAILNANYVAARLDPHFPVLYRNERGRVAHECIIDPRPLKQTCGVTVDDIAKRLIDYGFHAPTMSFPVAGTLMIEPTESESKAELDRFCDAMIAIRKEIAAVEQGRFTIEASPLRHAPHTVHDIADDDWNRVYRRSEGCFPEGTSRTDKYWCPVGRVDNVYGDRNLVCSCPPIGDYAQAAE</sequence>
<reference key="1">
    <citation type="journal article" date="2007" name="Science">
        <title>Legumes symbioses: absence of nod genes in photosynthetic bradyrhizobia.</title>
        <authorList>
            <person name="Giraud E."/>
            <person name="Moulin L."/>
            <person name="Vallenet D."/>
            <person name="Barbe V."/>
            <person name="Cytryn E."/>
            <person name="Avarre J.-C."/>
            <person name="Jaubert M."/>
            <person name="Simon D."/>
            <person name="Cartieaux F."/>
            <person name="Prin Y."/>
            <person name="Bena G."/>
            <person name="Hannibal L."/>
            <person name="Fardoux J."/>
            <person name="Kojadinovic M."/>
            <person name="Vuillet L."/>
            <person name="Lajus A."/>
            <person name="Cruveiller S."/>
            <person name="Rouy Z."/>
            <person name="Mangenot S."/>
            <person name="Segurens B."/>
            <person name="Dossat C."/>
            <person name="Franck W.L."/>
            <person name="Chang W.-S."/>
            <person name="Saunders E."/>
            <person name="Bruce D."/>
            <person name="Richardson P."/>
            <person name="Normand P."/>
            <person name="Dreyfus B."/>
            <person name="Pignol D."/>
            <person name="Stacey G."/>
            <person name="Emerich D."/>
            <person name="Vermeglio A."/>
            <person name="Medigue C."/>
            <person name="Sadowsky M."/>
        </authorList>
    </citation>
    <scope>NUCLEOTIDE SEQUENCE [LARGE SCALE GENOMIC DNA]</scope>
    <source>
        <strain>BTAi1 / ATCC BAA-1182</strain>
    </source>
</reference>
<comment type="function">
    <text evidence="1">The glycine cleavage system catalyzes the degradation of glycine. The P protein binds the alpha-amino group of glycine through its pyridoxal phosphate cofactor; CO(2) is released and the remaining methylamine moiety is then transferred to the lipoamide cofactor of the H protein.</text>
</comment>
<comment type="catalytic activity">
    <reaction evidence="1">
        <text>N(6)-[(R)-lipoyl]-L-lysyl-[glycine-cleavage complex H protein] + glycine + H(+) = N(6)-[(R)-S(8)-aminomethyldihydrolipoyl]-L-lysyl-[glycine-cleavage complex H protein] + CO2</text>
        <dbReference type="Rhea" id="RHEA:24304"/>
        <dbReference type="Rhea" id="RHEA-COMP:10494"/>
        <dbReference type="Rhea" id="RHEA-COMP:10495"/>
        <dbReference type="ChEBI" id="CHEBI:15378"/>
        <dbReference type="ChEBI" id="CHEBI:16526"/>
        <dbReference type="ChEBI" id="CHEBI:57305"/>
        <dbReference type="ChEBI" id="CHEBI:83099"/>
        <dbReference type="ChEBI" id="CHEBI:83143"/>
        <dbReference type="EC" id="1.4.4.2"/>
    </reaction>
</comment>
<comment type="cofactor">
    <cofactor evidence="1">
        <name>pyridoxal 5'-phosphate</name>
        <dbReference type="ChEBI" id="CHEBI:597326"/>
    </cofactor>
</comment>
<comment type="subunit">
    <text evidence="1">The glycine cleavage system is composed of four proteins: P, T, L and H.</text>
</comment>
<comment type="similarity">
    <text evidence="1">Belongs to the GcvP family.</text>
</comment>